<protein>
    <recommendedName>
        <fullName>Inner membrane protein YidH</fullName>
    </recommendedName>
</protein>
<sequence>MKISRLGEAPDYRFSLANERTFLAWIRTALGFLAAGVGLDQLAPDFATPVIRELLALLLCLFSGGLAMYGYLRWLRNEKAMRLKEDLPYTNSLLIISLILMVVAVIVMGLVLYAG</sequence>
<gene>
    <name type="primary">yidH</name>
    <name type="ordered locus">SF3786</name>
    <name type="ordered locus">S3983</name>
</gene>
<feature type="chain" id="PRO_0000169631" description="Inner membrane protein YidH">
    <location>
        <begin position="1"/>
        <end position="115"/>
    </location>
</feature>
<feature type="topological domain" description="Cytoplasmic" evidence="2">
    <location>
        <begin position="1"/>
        <end position="30"/>
    </location>
</feature>
<feature type="transmembrane region" description="Helical" evidence="2">
    <location>
        <begin position="31"/>
        <end position="51"/>
    </location>
</feature>
<feature type="topological domain" description="Periplasmic" evidence="2">
    <location>
        <begin position="52"/>
        <end position="53"/>
    </location>
</feature>
<feature type="transmembrane region" description="Helical" evidence="2">
    <location>
        <begin position="54"/>
        <end position="74"/>
    </location>
</feature>
<feature type="topological domain" description="Cytoplasmic" evidence="2">
    <location>
        <begin position="75"/>
        <end position="92"/>
    </location>
</feature>
<feature type="transmembrane region" description="Helical" evidence="2">
    <location>
        <begin position="93"/>
        <end position="113"/>
    </location>
</feature>
<feature type="topological domain" description="Periplasmic" evidence="2">
    <location>
        <begin position="114"/>
        <end position="115"/>
    </location>
</feature>
<accession>P0ADM3</accession>
<accession>P31445</accession>
<reference key="1">
    <citation type="journal article" date="2002" name="Nucleic Acids Res.">
        <title>Genome sequence of Shigella flexneri 2a: insights into pathogenicity through comparison with genomes of Escherichia coli K12 and O157.</title>
        <authorList>
            <person name="Jin Q."/>
            <person name="Yuan Z."/>
            <person name="Xu J."/>
            <person name="Wang Y."/>
            <person name="Shen Y."/>
            <person name="Lu W."/>
            <person name="Wang J."/>
            <person name="Liu H."/>
            <person name="Yang J."/>
            <person name="Yang F."/>
            <person name="Zhang X."/>
            <person name="Zhang J."/>
            <person name="Yang G."/>
            <person name="Wu H."/>
            <person name="Qu D."/>
            <person name="Dong J."/>
            <person name="Sun L."/>
            <person name="Xue Y."/>
            <person name="Zhao A."/>
            <person name="Gao Y."/>
            <person name="Zhu J."/>
            <person name="Kan B."/>
            <person name="Ding K."/>
            <person name="Chen S."/>
            <person name="Cheng H."/>
            <person name="Yao Z."/>
            <person name="He B."/>
            <person name="Chen R."/>
            <person name="Ma D."/>
            <person name="Qiang B."/>
            <person name="Wen Y."/>
            <person name="Hou Y."/>
            <person name="Yu J."/>
        </authorList>
    </citation>
    <scope>NUCLEOTIDE SEQUENCE [LARGE SCALE GENOMIC DNA]</scope>
    <source>
        <strain>301 / Serotype 2a</strain>
    </source>
</reference>
<reference key="2">
    <citation type="journal article" date="2003" name="Infect. Immun.">
        <title>Complete genome sequence and comparative genomics of Shigella flexneri serotype 2a strain 2457T.</title>
        <authorList>
            <person name="Wei J."/>
            <person name="Goldberg M.B."/>
            <person name="Burland V."/>
            <person name="Venkatesan M.M."/>
            <person name="Deng W."/>
            <person name="Fournier G."/>
            <person name="Mayhew G.F."/>
            <person name="Plunkett G. III"/>
            <person name="Rose D.J."/>
            <person name="Darling A."/>
            <person name="Mau B."/>
            <person name="Perna N.T."/>
            <person name="Payne S.M."/>
            <person name="Runyen-Janecky L.J."/>
            <person name="Zhou S."/>
            <person name="Schwartz D.C."/>
            <person name="Blattner F.R."/>
        </authorList>
    </citation>
    <scope>NUCLEOTIDE SEQUENCE [LARGE SCALE GENOMIC DNA]</scope>
    <source>
        <strain>ATCC 700930 / 2457T / Serotype 2a</strain>
    </source>
</reference>
<dbReference type="EMBL" id="AE005674">
    <property type="protein sequence ID" value="AAN45226.1"/>
    <property type="molecule type" value="Genomic_DNA"/>
</dbReference>
<dbReference type="EMBL" id="AE014073">
    <property type="protein sequence ID" value="AAP18971.1"/>
    <property type="molecule type" value="Genomic_DNA"/>
</dbReference>
<dbReference type="RefSeq" id="NP_709519.1">
    <property type="nucleotide sequence ID" value="NC_004337.2"/>
</dbReference>
<dbReference type="RefSeq" id="WP_000703959.1">
    <property type="nucleotide sequence ID" value="NZ_WPGW01000019.1"/>
</dbReference>
<dbReference type="SMR" id="P0ADM3"/>
<dbReference type="STRING" id="198214.SF3786"/>
<dbReference type="PaxDb" id="198214-SF3786"/>
<dbReference type="GeneID" id="1026130"/>
<dbReference type="KEGG" id="sfl:SF3786"/>
<dbReference type="KEGG" id="sfx:S3983"/>
<dbReference type="PATRIC" id="fig|198214.7.peg.4471"/>
<dbReference type="HOGENOM" id="CLU_053359_4_1_6"/>
<dbReference type="Proteomes" id="UP000001006">
    <property type="component" value="Chromosome"/>
</dbReference>
<dbReference type="Proteomes" id="UP000002673">
    <property type="component" value="Chromosome"/>
</dbReference>
<dbReference type="GO" id="GO:0005886">
    <property type="term" value="C:plasma membrane"/>
    <property type="evidence" value="ECO:0007669"/>
    <property type="project" value="UniProtKB-SubCell"/>
</dbReference>
<dbReference type="InterPro" id="IPR003807">
    <property type="entry name" value="DUF202"/>
</dbReference>
<dbReference type="InterPro" id="IPR052053">
    <property type="entry name" value="IM_YidH-like"/>
</dbReference>
<dbReference type="PANTHER" id="PTHR34187:SF2">
    <property type="entry name" value="DUF202 DOMAIN-CONTAINING PROTEIN"/>
    <property type="match status" value="1"/>
</dbReference>
<dbReference type="PANTHER" id="PTHR34187">
    <property type="entry name" value="FGR18P"/>
    <property type="match status" value="1"/>
</dbReference>
<dbReference type="Pfam" id="PF02656">
    <property type="entry name" value="DUF202"/>
    <property type="match status" value="1"/>
</dbReference>
<evidence type="ECO:0000250" key="1"/>
<evidence type="ECO:0000255" key="2"/>
<evidence type="ECO:0000305" key="3"/>
<name>YIDH_SHIFL</name>
<keyword id="KW-0997">Cell inner membrane</keyword>
<keyword id="KW-1003">Cell membrane</keyword>
<keyword id="KW-0472">Membrane</keyword>
<keyword id="KW-1185">Reference proteome</keyword>
<keyword id="KW-0812">Transmembrane</keyword>
<keyword id="KW-1133">Transmembrane helix</keyword>
<organism>
    <name type="scientific">Shigella flexneri</name>
    <dbReference type="NCBI Taxonomy" id="623"/>
    <lineage>
        <taxon>Bacteria</taxon>
        <taxon>Pseudomonadati</taxon>
        <taxon>Pseudomonadota</taxon>
        <taxon>Gammaproteobacteria</taxon>
        <taxon>Enterobacterales</taxon>
        <taxon>Enterobacteriaceae</taxon>
        <taxon>Shigella</taxon>
    </lineage>
</organism>
<proteinExistence type="inferred from homology"/>
<comment type="subcellular location">
    <subcellularLocation>
        <location evidence="1">Cell inner membrane</location>
        <topology evidence="1">Multi-pass membrane protein</topology>
    </subcellularLocation>
</comment>
<comment type="similarity">
    <text evidence="3">To M.tuberculosis Rv2272.</text>
</comment>